<protein>
    <recommendedName>
        <fullName evidence="1">Valine--tRNA ligase</fullName>
        <ecNumber evidence="1">6.1.1.9</ecNumber>
    </recommendedName>
    <alternativeName>
        <fullName evidence="1">Valyl-tRNA synthetase</fullName>
        <shortName evidence="1">ValRS</shortName>
    </alternativeName>
</protein>
<gene>
    <name evidence="1" type="primary">valS</name>
    <name type="ordered locus">BDI_3795</name>
</gene>
<feature type="chain" id="PRO_1000022171" description="Valine--tRNA ligase">
    <location>
        <begin position="1"/>
        <end position="873"/>
    </location>
</feature>
<feature type="coiled-coil region" evidence="1">
    <location>
        <begin position="802"/>
        <end position="873"/>
    </location>
</feature>
<feature type="short sequence motif" description="'HIGH' region">
    <location>
        <begin position="43"/>
        <end position="53"/>
    </location>
</feature>
<feature type="short sequence motif" description="'KMSKS' region">
    <location>
        <begin position="532"/>
        <end position="536"/>
    </location>
</feature>
<feature type="binding site" evidence="1">
    <location>
        <position position="535"/>
    </location>
    <ligand>
        <name>ATP</name>
        <dbReference type="ChEBI" id="CHEBI:30616"/>
    </ligand>
</feature>
<organism>
    <name type="scientific">Parabacteroides distasonis (strain ATCC 8503 / DSM 20701 / CIP 104284 / JCM 5825 / NCTC 11152)</name>
    <dbReference type="NCBI Taxonomy" id="435591"/>
    <lineage>
        <taxon>Bacteria</taxon>
        <taxon>Pseudomonadati</taxon>
        <taxon>Bacteroidota</taxon>
        <taxon>Bacteroidia</taxon>
        <taxon>Bacteroidales</taxon>
        <taxon>Tannerellaceae</taxon>
        <taxon>Parabacteroides</taxon>
    </lineage>
</organism>
<reference key="1">
    <citation type="journal article" date="2007" name="PLoS Biol.">
        <title>Evolution of symbiotic bacteria in the distal human intestine.</title>
        <authorList>
            <person name="Xu J."/>
            <person name="Mahowald M.A."/>
            <person name="Ley R.E."/>
            <person name="Lozupone C.A."/>
            <person name="Hamady M."/>
            <person name="Martens E.C."/>
            <person name="Henrissat B."/>
            <person name="Coutinho P.M."/>
            <person name="Minx P."/>
            <person name="Latreille P."/>
            <person name="Cordum H."/>
            <person name="Van Brunt A."/>
            <person name="Kim K."/>
            <person name="Fulton R.S."/>
            <person name="Fulton L.A."/>
            <person name="Clifton S.W."/>
            <person name="Wilson R.K."/>
            <person name="Knight R.D."/>
            <person name="Gordon J.I."/>
        </authorList>
    </citation>
    <scope>NUCLEOTIDE SEQUENCE [LARGE SCALE GENOMIC DNA]</scope>
    <source>
        <strain>ATCC 8503 / DSM 20701 / CIP 104284 / JCM 5825 / NCTC 11152</strain>
    </source>
</reference>
<sequence length="873" mass="99787">MEIASKYNPAEVEGKWYQYWLDNGFFKSKPDGREPYTIVIPPPNVTGVLHMGHMLNNTIQDILVRRARMMGKNACWVPGTDHASIATEAKVVNRLAGQGIKKTDLTRDEFLRHAWEWKEEHGGIILKQLRKLGASCDWDRTAFTMDEKRSESVIKVFVDLYKKGLIYRGVRMVNWDPKALTALSDEEVIYKEEHSKLYYLRYKIVGEEGYAVVATTRPETIMGDTAMCINPNDPKNQHLRGKKVIVPLVGREIPVIEDDYVDIEFGTGCLKVTPAHDVNDYMLGEKYNLPSIDIFNDNGTLSEAAGLYVGMDRFDVRKQIEEDLRNAGLLEKVEAYENKVGFSERTNVPIEPKLSMQWFLKMEHLAQIALEPVMKDDIKFYPPKFKNTYRHWMENIKDWCISRQLWWGHRIPAYFLPEGGYVVAETEEKALELAKEKCGNPNLTMSDLRQDEDVLDTWFSSWLWPISLFDGINNPDNEEINYYYPTSDLVTGPDIIFFWVARMIMAGYEYRGKMPFKSVYFTGIVRDKLGRKMSKSLGNSPDPLQLIEQYGADGVRMGLMLAAPAGNDIPFDDALCEQGRNFNNKIWNAFRLVKGWTVDDTIAQPEASAIAVKWFKMQLDKTIAEVDDSFSKYRLSEAMMAVYKLFWDEFSSWYLEMVKPGYQQPIDKATYEATLGFFDALLRLLHPFMPFITEELWQALEPRKEGESLMVAQMPEIAVIDSAYLDAFEIVKEIVGGVRTIRLQKNIPNKDALELQIVGEHNEAFNAVIAKMCNLSSISKVEEKAAGAVSFLVRTTEYAVPLGNLINVEEELAKLQEELKYQKGFLASVMKKLGNENFVSKAPAKVIEMEKKKQADAESKIKSIEESIAALTK</sequence>
<evidence type="ECO:0000255" key="1">
    <source>
        <dbReference type="HAMAP-Rule" id="MF_02004"/>
    </source>
</evidence>
<keyword id="KW-0030">Aminoacyl-tRNA synthetase</keyword>
<keyword id="KW-0067">ATP-binding</keyword>
<keyword id="KW-0175">Coiled coil</keyword>
<keyword id="KW-0963">Cytoplasm</keyword>
<keyword id="KW-0436">Ligase</keyword>
<keyword id="KW-0547">Nucleotide-binding</keyword>
<keyword id="KW-0648">Protein biosynthesis</keyword>
<keyword id="KW-1185">Reference proteome</keyword>
<comment type="function">
    <text evidence="1">Catalyzes the attachment of valine to tRNA(Val). As ValRS can inadvertently accommodate and process structurally similar amino acids such as threonine, to avoid such errors, it has a 'posttransfer' editing activity that hydrolyzes mischarged Thr-tRNA(Val) in a tRNA-dependent manner.</text>
</comment>
<comment type="catalytic activity">
    <reaction evidence="1">
        <text>tRNA(Val) + L-valine + ATP = L-valyl-tRNA(Val) + AMP + diphosphate</text>
        <dbReference type="Rhea" id="RHEA:10704"/>
        <dbReference type="Rhea" id="RHEA-COMP:9672"/>
        <dbReference type="Rhea" id="RHEA-COMP:9708"/>
        <dbReference type="ChEBI" id="CHEBI:30616"/>
        <dbReference type="ChEBI" id="CHEBI:33019"/>
        <dbReference type="ChEBI" id="CHEBI:57762"/>
        <dbReference type="ChEBI" id="CHEBI:78442"/>
        <dbReference type="ChEBI" id="CHEBI:78537"/>
        <dbReference type="ChEBI" id="CHEBI:456215"/>
        <dbReference type="EC" id="6.1.1.9"/>
    </reaction>
</comment>
<comment type="subunit">
    <text evidence="1">Monomer.</text>
</comment>
<comment type="subcellular location">
    <subcellularLocation>
        <location evidence="1">Cytoplasm</location>
    </subcellularLocation>
</comment>
<comment type="domain">
    <text evidence="1">ValRS has two distinct active sites: one for aminoacylation and one for editing. The misactivated threonine is translocated from the active site to the editing site.</text>
</comment>
<comment type="domain">
    <text evidence="1">The C-terminal coiled-coil domain is crucial for aminoacylation activity.</text>
</comment>
<comment type="similarity">
    <text evidence="1">Belongs to the class-I aminoacyl-tRNA synthetase family. ValS type 1 subfamily.</text>
</comment>
<accession>A6LIG7</accession>
<proteinExistence type="inferred from homology"/>
<dbReference type="EC" id="6.1.1.9" evidence="1"/>
<dbReference type="EMBL" id="CP000140">
    <property type="protein sequence ID" value="ABR45481.1"/>
    <property type="molecule type" value="Genomic_DNA"/>
</dbReference>
<dbReference type="RefSeq" id="WP_009017033.1">
    <property type="nucleotide sequence ID" value="NC_009615.1"/>
</dbReference>
<dbReference type="SMR" id="A6LIG7"/>
<dbReference type="STRING" id="435591.BDI_3795"/>
<dbReference type="PaxDb" id="435591-BDI_3795"/>
<dbReference type="KEGG" id="pdi:BDI_3795"/>
<dbReference type="eggNOG" id="COG0525">
    <property type="taxonomic scope" value="Bacteria"/>
</dbReference>
<dbReference type="HOGENOM" id="CLU_001493_0_2_10"/>
<dbReference type="BioCyc" id="PDIS435591:G1G5A-3892-MONOMER"/>
<dbReference type="Proteomes" id="UP000000566">
    <property type="component" value="Chromosome"/>
</dbReference>
<dbReference type="GO" id="GO:0005829">
    <property type="term" value="C:cytosol"/>
    <property type="evidence" value="ECO:0007669"/>
    <property type="project" value="TreeGrafter"/>
</dbReference>
<dbReference type="GO" id="GO:0002161">
    <property type="term" value="F:aminoacyl-tRNA deacylase activity"/>
    <property type="evidence" value="ECO:0007669"/>
    <property type="project" value="InterPro"/>
</dbReference>
<dbReference type="GO" id="GO:0005524">
    <property type="term" value="F:ATP binding"/>
    <property type="evidence" value="ECO:0007669"/>
    <property type="project" value="UniProtKB-UniRule"/>
</dbReference>
<dbReference type="GO" id="GO:0004832">
    <property type="term" value="F:valine-tRNA ligase activity"/>
    <property type="evidence" value="ECO:0007669"/>
    <property type="project" value="UniProtKB-UniRule"/>
</dbReference>
<dbReference type="GO" id="GO:0006438">
    <property type="term" value="P:valyl-tRNA aminoacylation"/>
    <property type="evidence" value="ECO:0007669"/>
    <property type="project" value="UniProtKB-UniRule"/>
</dbReference>
<dbReference type="CDD" id="cd07962">
    <property type="entry name" value="Anticodon_Ia_Val"/>
    <property type="match status" value="1"/>
</dbReference>
<dbReference type="CDD" id="cd00817">
    <property type="entry name" value="ValRS_core"/>
    <property type="match status" value="1"/>
</dbReference>
<dbReference type="FunFam" id="1.10.730.10:FF:000002">
    <property type="entry name" value="Leucine--tRNA ligase"/>
    <property type="match status" value="1"/>
</dbReference>
<dbReference type="FunFam" id="1.10.287.380:FF:000001">
    <property type="entry name" value="Valine--tRNA ligase"/>
    <property type="match status" value="1"/>
</dbReference>
<dbReference type="FunFam" id="3.40.50.620:FF:000032">
    <property type="entry name" value="Valine--tRNA ligase"/>
    <property type="match status" value="1"/>
</dbReference>
<dbReference type="FunFam" id="3.90.740.10:FF:000015">
    <property type="entry name" value="Valine--tRNA ligase"/>
    <property type="match status" value="1"/>
</dbReference>
<dbReference type="Gene3D" id="3.40.50.620">
    <property type="entry name" value="HUPs"/>
    <property type="match status" value="2"/>
</dbReference>
<dbReference type="Gene3D" id="1.10.730.10">
    <property type="entry name" value="Isoleucyl-tRNA Synthetase, Domain 1"/>
    <property type="match status" value="1"/>
</dbReference>
<dbReference type="Gene3D" id="1.10.287.380">
    <property type="entry name" value="Valyl-tRNA synthetase, C-terminal domain"/>
    <property type="match status" value="1"/>
</dbReference>
<dbReference type="Gene3D" id="3.90.740.10">
    <property type="entry name" value="Valyl/Leucyl/Isoleucyl-tRNA synthetase, editing domain"/>
    <property type="match status" value="1"/>
</dbReference>
<dbReference type="HAMAP" id="MF_02004">
    <property type="entry name" value="Val_tRNA_synth_type1"/>
    <property type="match status" value="1"/>
</dbReference>
<dbReference type="InterPro" id="IPR001412">
    <property type="entry name" value="aa-tRNA-synth_I_CS"/>
</dbReference>
<dbReference type="InterPro" id="IPR002300">
    <property type="entry name" value="aa-tRNA-synth_Ia"/>
</dbReference>
<dbReference type="InterPro" id="IPR033705">
    <property type="entry name" value="Anticodon_Ia_Val"/>
</dbReference>
<dbReference type="InterPro" id="IPR013155">
    <property type="entry name" value="M/V/L/I-tRNA-synth_anticd-bd"/>
</dbReference>
<dbReference type="InterPro" id="IPR014729">
    <property type="entry name" value="Rossmann-like_a/b/a_fold"/>
</dbReference>
<dbReference type="InterPro" id="IPR010978">
    <property type="entry name" value="tRNA-bd_arm"/>
</dbReference>
<dbReference type="InterPro" id="IPR009080">
    <property type="entry name" value="tRNAsynth_Ia_anticodon-bd"/>
</dbReference>
<dbReference type="InterPro" id="IPR037118">
    <property type="entry name" value="Val-tRNA_synth_C_sf"/>
</dbReference>
<dbReference type="InterPro" id="IPR019499">
    <property type="entry name" value="Val-tRNA_synth_tRNA-bd"/>
</dbReference>
<dbReference type="InterPro" id="IPR009008">
    <property type="entry name" value="Val/Leu/Ile-tRNA-synth_edit"/>
</dbReference>
<dbReference type="InterPro" id="IPR002303">
    <property type="entry name" value="Valyl-tRNA_ligase"/>
</dbReference>
<dbReference type="NCBIfam" id="NF004349">
    <property type="entry name" value="PRK05729.1"/>
    <property type="match status" value="1"/>
</dbReference>
<dbReference type="NCBIfam" id="TIGR00422">
    <property type="entry name" value="valS"/>
    <property type="match status" value="1"/>
</dbReference>
<dbReference type="PANTHER" id="PTHR11946:SF109">
    <property type="entry name" value="VALINE--TRNA LIGASE"/>
    <property type="match status" value="1"/>
</dbReference>
<dbReference type="PANTHER" id="PTHR11946">
    <property type="entry name" value="VALYL-TRNA SYNTHETASES"/>
    <property type="match status" value="1"/>
</dbReference>
<dbReference type="Pfam" id="PF08264">
    <property type="entry name" value="Anticodon_1"/>
    <property type="match status" value="1"/>
</dbReference>
<dbReference type="Pfam" id="PF00133">
    <property type="entry name" value="tRNA-synt_1"/>
    <property type="match status" value="1"/>
</dbReference>
<dbReference type="Pfam" id="PF10458">
    <property type="entry name" value="Val_tRNA-synt_C"/>
    <property type="match status" value="1"/>
</dbReference>
<dbReference type="PRINTS" id="PR00986">
    <property type="entry name" value="TRNASYNTHVAL"/>
</dbReference>
<dbReference type="SUPFAM" id="SSF47323">
    <property type="entry name" value="Anticodon-binding domain of a subclass of class I aminoacyl-tRNA synthetases"/>
    <property type="match status" value="1"/>
</dbReference>
<dbReference type="SUPFAM" id="SSF52374">
    <property type="entry name" value="Nucleotidylyl transferase"/>
    <property type="match status" value="1"/>
</dbReference>
<dbReference type="SUPFAM" id="SSF46589">
    <property type="entry name" value="tRNA-binding arm"/>
    <property type="match status" value="1"/>
</dbReference>
<dbReference type="SUPFAM" id="SSF50677">
    <property type="entry name" value="ValRS/IleRS/LeuRS editing domain"/>
    <property type="match status" value="1"/>
</dbReference>
<dbReference type="PROSITE" id="PS00178">
    <property type="entry name" value="AA_TRNA_LIGASE_I"/>
    <property type="match status" value="1"/>
</dbReference>
<name>SYV_PARD8</name>